<proteinExistence type="inferred from homology"/>
<reference key="1">
    <citation type="journal article" date="2003" name="Proc. Natl. Acad. Sci. U.S.A.">
        <title>The complete genome sequence of Chromobacterium violaceum reveals remarkable and exploitable bacterial adaptability.</title>
        <authorList>
            <person name="Vasconcelos A.T.R."/>
            <person name="de Almeida D.F."/>
            <person name="Hungria M."/>
            <person name="Guimaraes C.T."/>
            <person name="Antonio R.V."/>
            <person name="Almeida F.C."/>
            <person name="de Almeida L.G.P."/>
            <person name="de Almeida R."/>
            <person name="Alves-Gomes J.A."/>
            <person name="Andrade E.M."/>
            <person name="Araripe J."/>
            <person name="de Araujo M.F.F."/>
            <person name="Astolfi-Filho S."/>
            <person name="Azevedo V."/>
            <person name="Baptista A.J."/>
            <person name="Bataus L.A.M."/>
            <person name="Batista J.S."/>
            <person name="Belo A."/>
            <person name="van den Berg C."/>
            <person name="Bogo M."/>
            <person name="Bonatto S."/>
            <person name="Bordignon J."/>
            <person name="Brigido M.M."/>
            <person name="Brito C.A."/>
            <person name="Brocchi M."/>
            <person name="Burity H.A."/>
            <person name="Camargo A.A."/>
            <person name="Cardoso D.D.P."/>
            <person name="Carneiro N.P."/>
            <person name="Carraro D.M."/>
            <person name="Carvalho C.M.B."/>
            <person name="Cascardo J.C.M."/>
            <person name="Cavada B.S."/>
            <person name="Chueire L.M.O."/>
            <person name="Creczynski-Pasa T.B."/>
            <person name="Cunha-Junior N.C."/>
            <person name="Fagundes N."/>
            <person name="Falcao C.L."/>
            <person name="Fantinatti F."/>
            <person name="Farias I.P."/>
            <person name="Felipe M.S.S."/>
            <person name="Ferrari L.P."/>
            <person name="Ferro J.A."/>
            <person name="Ferro M.I.T."/>
            <person name="Franco G.R."/>
            <person name="Freitas N.S.A."/>
            <person name="Furlan L.R."/>
            <person name="Gazzinelli R.T."/>
            <person name="Gomes E.A."/>
            <person name="Goncalves P.R."/>
            <person name="Grangeiro T.B."/>
            <person name="Grattapaglia D."/>
            <person name="Grisard E.C."/>
            <person name="Hanna E.S."/>
            <person name="Jardim S.N."/>
            <person name="Laurino J."/>
            <person name="Leoi L.C.T."/>
            <person name="Lima L.F.A."/>
            <person name="Loureiro M.F."/>
            <person name="Lyra M.C.C.P."/>
            <person name="Madeira H.M.F."/>
            <person name="Manfio G.P."/>
            <person name="Maranhao A.Q."/>
            <person name="Martins W.S."/>
            <person name="di Mauro S.M.Z."/>
            <person name="de Medeiros S.R.B."/>
            <person name="Meissner R.V."/>
            <person name="Moreira M.A.M."/>
            <person name="Nascimento F.F."/>
            <person name="Nicolas M.F."/>
            <person name="Oliveira J.G."/>
            <person name="Oliveira S.C."/>
            <person name="Paixao R.F.C."/>
            <person name="Parente J.A."/>
            <person name="Pedrosa F.O."/>
            <person name="Pena S.D.J."/>
            <person name="Pereira J.O."/>
            <person name="Pereira M."/>
            <person name="Pinto L.S.R.C."/>
            <person name="Pinto L.S."/>
            <person name="Porto J.I.R."/>
            <person name="Potrich D.P."/>
            <person name="Ramalho-Neto C.E."/>
            <person name="Reis A.M.M."/>
            <person name="Rigo L.U."/>
            <person name="Rondinelli E."/>
            <person name="Santos E.B.P."/>
            <person name="Santos F.R."/>
            <person name="Schneider M.P.C."/>
            <person name="Seuanez H.N."/>
            <person name="Silva A.M.R."/>
            <person name="da Silva A.L.C."/>
            <person name="Silva D.W."/>
            <person name="Silva R."/>
            <person name="Simoes I.C."/>
            <person name="Simon D."/>
            <person name="Soares C.M.A."/>
            <person name="Soares R.B.A."/>
            <person name="Souza E.M."/>
            <person name="Souza K.R.L."/>
            <person name="Souza R.C."/>
            <person name="Steffens M.B.R."/>
            <person name="Steindel M."/>
            <person name="Teixeira S.R."/>
            <person name="Urmenyi T."/>
            <person name="Vettore A."/>
            <person name="Wassem R."/>
            <person name="Zaha A."/>
            <person name="Simpson A.J.G."/>
        </authorList>
    </citation>
    <scope>NUCLEOTIDE SEQUENCE [LARGE SCALE GENOMIC DNA]</scope>
    <source>
        <strain>ATCC 12472 / DSM 30191 / JCM 1249 / CCUG 213 / NBRC 12614 / NCIMB 9131 / NCTC 9757 / MK</strain>
    </source>
</reference>
<dbReference type="EC" id="1.1.1.25" evidence="1"/>
<dbReference type="EMBL" id="AE016825">
    <property type="protein sequence ID" value="AAQ61249.1"/>
    <property type="molecule type" value="Genomic_DNA"/>
</dbReference>
<dbReference type="RefSeq" id="WP_011137134.1">
    <property type="nucleotide sequence ID" value="NC_005085.1"/>
</dbReference>
<dbReference type="SMR" id="Q7NS40"/>
<dbReference type="STRING" id="243365.CV_3587"/>
<dbReference type="KEGG" id="cvi:CV_3587"/>
<dbReference type="eggNOG" id="COG0169">
    <property type="taxonomic scope" value="Bacteria"/>
</dbReference>
<dbReference type="HOGENOM" id="CLU_044063_2_1_4"/>
<dbReference type="OrthoDB" id="9776868at2"/>
<dbReference type="UniPathway" id="UPA00053">
    <property type="reaction ID" value="UER00087"/>
</dbReference>
<dbReference type="Proteomes" id="UP000001424">
    <property type="component" value="Chromosome"/>
</dbReference>
<dbReference type="GO" id="GO:0005829">
    <property type="term" value="C:cytosol"/>
    <property type="evidence" value="ECO:0007669"/>
    <property type="project" value="TreeGrafter"/>
</dbReference>
<dbReference type="GO" id="GO:0050661">
    <property type="term" value="F:NADP binding"/>
    <property type="evidence" value="ECO:0007669"/>
    <property type="project" value="InterPro"/>
</dbReference>
<dbReference type="GO" id="GO:0004764">
    <property type="term" value="F:shikimate 3-dehydrogenase (NADP+) activity"/>
    <property type="evidence" value="ECO:0007669"/>
    <property type="project" value="UniProtKB-UniRule"/>
</dbReference>
<dbReference type="GO" id="GO:0008652">
    <property type="term" value="P:amino acid biosynthetic process"/>
    <property type="evidence" value="ECO:0007669"/>
    <property type="project" value="UniProtKB-KW"/>
</dbReference>
<dbReference type="GO" id="GO:0009073">
    <property type="term" value="P:aromatic amino acid family biosynthetic process"/>
    <property type="evidence" value="ECO:0007669"/>
    <property type="project" value="UniProtKB-KW"/>
</dbReference>
<dbReference type="GO" id="GO:0009423">
    <property type="term" value="P:chorismate biosynthetic process"/>
    <property type="evidence" value="ECO:0007669"/>
    <property type="project" value="UniProtKB-UniRule"/>
</dbReference>
<dbReference type="GO" id="GO:0019632">
    <property type="term" value="P:shikimate metabolic process"/>
    <property type="evidence" value="ECO:0007669"/>
    <property type="project" value="InterPro"/>
</dbReference>
<dbReference type="CDD" id="cd01065">
    <property type="entry name" value="NAD_bind_Shikimate_DH"/>
    <property type="match status" value="1"/>
</dbReference>
<dbReference type="FunFam" id="3.40.50.10860:FF:000006">
    <property type="entry name" value="Shikimate dehydrogenase (NADP(+))"/>
    <property type="match status" value="1"/>
</dbReference>
<dbReference type="Gene3D" id="3.40.50.10860">
    <property type="entry name" value="Leucine Dehydrogenase, chain A, domain 1"/>
    <property type="match status" value="1"/>
</dbReference>
<dbReference type="Gene3D" id="3.40.50.720">
    <property type="entry name" value="NAD(P)-binding Rossmann-like Domain"/>
    <property type="match status" value="1"/>
</dbReference>
<dbReference type="HAMAP" id="MF_00222">
    <property type="entry name" value="Shikimate_DH_AroE"/>
    <property type="match status" value="1"/>
</dbReference>
<dbReference type="InterPro" id="IPR046346">
    <property type="entry name" value="Aminoacid_DH-like_N_sf"/>
</dbReference>
<dbReference type="InterPro" id="IPR036291">
    <property type="entry name" value="NAD(P)-bd_dom_sf"/>
</dbReference>
<dbReference type="InterPro" id="IPR041121">
    <property type="entry name" value="SDH_C"/>
</dbReference>
<dbReference type="InterPro" id="IPR011342">
    <property type="entry name" value="Shikimate_DH"/>
</dbReference>
<dbReference type="InterPro" id="IPR013708">
    <property type="entry name" value="Shikimate_DH-bd_N"/>
</dbReference>
<dbReference type="InterPro" id="IPR022893">
    <property type="entry name" value="Shikimate_DH_fam"/>
</dbReference>
<dbReference type="InterPro" id="IPR006151">
    <property type="entry name" value="Shikm_DH/Glu-tRNA_Rdtase"/>
</dbReference>
<dbReference type="NCBIfam" id="TIGR00507">
    <property type="entry name" value="aroE"/>
    <property type="match status" value="1"/>
</dbReference>
<dbReference type="NCBIfam" id="NF001310">
    <property type="entry name" value="PRK00258.1-2"/>
    <property type="match status" value="1"/>
</dbReference>
<dbReference type="PANTHER" id="PTHR21089:SF1">
    <property type="entry name" value="BIFUNCTIONAL 3-DEHYDROQUINATE DEHYDRATASE_SHIKIMATE DEHYDROGENASE, CHLOROPLASTIC"/>
    <property type="match status" value="1"/>
</dbReference>
<dbReference type="PANTHER" id="PTHR21089">
    <property type="entry name" value="SHIKIMATE DEHYDROGENASE"/>
    <property type="match status" value="1"/>
</dbReference>
<dbReference type="Pfam" id="PF18317">
    <property type="entry name" value="SDH_C"/>
    <property type="match status" value="1"/>
</dbReference>
<dbReference type="Pfam" id="PF01488">
    <property type="entry name" value="Shikimate_DH"/>
    <property type="match status" value="1"/>
</dbReference>
<dbReference type="Pfam" id="PF08501">
    <property type="entry name" value="Shikimate_dh_N"/>
    <property type="match status" value="1"/>
</dbReference>
<dbReference type="SUPFAM" id="SSF53223">
    <property type="entry name" value="Aminoacid dehydrogenase-like, N-terminal domain"/>
    <property type="match status" value="1"/>
</dbReference>
<dbReference type="SUPFAM" id="SSF51735">
    <property type="entry name" value="NAD(P)-binding Rossmann-fold domains"/>
    <property type="match status" value="1"/>
</dbReference>
<accession>Q7NS40</accession>
<comment type="function">
    <text evidence="1">Involved in the biosynthesis of the chorismate, which leads to the biosynthesis of aromatic amino acids. Catalyzes the reversible NADPH linked reduction of 3-dehydroshikimate (DHSA) to yield shikimate (SA).</text>
</comment>
<comment type="catalytic activity">
    <reaction evidence="1">
        <text>shikimate + NADP(+) = 3-dehydroshikimate + NADPH + H(+)</text>
        <dbReference type="Rhea" id="RHEA:17737"/>
        <dbReference type="ChEBI" id="CHEBI:15378"/>
        <dbReference type="ChEBI" id="CHEBI:16630"/>
        <dbReference type="ChEBI" id="CHEBI:36208"/>
        <dbReference type="ChEBI" id="CHEBI:57783"/>
        <dbReference type="ChEBI" id="CHEBI:58349"/>
        <dbReference type="EC" id="1.1.1.25"/>
    </reaction>
</comment>
<comment type="pathway">
    <text evidence="1">Metabolic intermediate biosynthesis; chorismate biosynthesis; chorismate from D-erythrose 4-phosphate and phosphoenolpyruvate: step 4/7.</text>
</comment>
<comment type="subunit">
    <text evidence="1">Homodimer.</text>
</comment>
<comment type="similarity">
    <text evidence="1">Belongs to the shikimate dehydrogenase family.</text>
</comment>
<keyword id="KW-0028">Amino-acid biosynthesis</keyword>
<keyword id="KW-0057">Aromatic amino acid biosynthesis</keyword>
<keyword id="KW-0521">NADP</keyword>
<keyword id="KW-0560">Oxidoreductase</keyword>
<keyword id="KW-1185">Reference proteome</keyword>
<gene>
    <name evidence="1" type="primary">aroE</name>
    <name type="ordered locus">CV_3587</name>
</gene>
<protein>
    <recommendedName>
        <fullName evidence="1">Shikimate dehydrogenase (NADP(+))</fullName>
        <shortName evidence="1">SDH</shortName>
        <ecNumber evidence="1">1.1.1.25</ecNumber>
    </recommendedName>
</protein>
<sequence>MTDRYAVIGNPISHSQSPFIHEEFARATGQDISYERLFADIGRFNDVVGEFVASGGKGLNITLPFKGDAFRYASELTERARAAEAVNTLTFRDGKVYGDNTDGVGLVRDIVENLDYPIVGRRVLILGAGGAVRGVLEPILEQKPASLTIANRTVIKAEALAHHFARYGKVEAVGYAALEGRSFDIVINATSTSLNNEMPPLPHGVFTPRTLAYDMVYSTGLTPFLQRAQGENAGMLADGLGMLVEQAAESFSIWRGAQPETRKVTNMLREVLA</sequence>
<evidence type="ECO:0000255" key="1">
    <source>
        <dbReference type="HAMAP-Rule" id="MF_00222"/>
    </source>
</evidence>
<name>AROE_CHRVO</name>
<feature type="chain" id="PRO_0000325112" description="Shikimate dehydrogenase (NADP(+))">
    <location>
        <begin position="1"/>
        <end position="273"/>
    </location>
</feature>
<feature type="active site" description="Proton acceptor" evidence="1">
    <location>
        <position position="66"/>
    </location>
</feature>
<feature type="binding site" evidence="1">
    <location>
        <begin position="15"/>
        <end position="17"/>
    </location>
    <ligand>
        <name>shikimate</name>
        <dbReference type="ChEBI" id="CHEBI:36208"/>
    </ligand>
</feature>
<feature type="binding site" evidence="1">
    <location>
        <position position="62"/>
    </location>
    <ligand>
        <name>shikimate</name>
        <dbReference type="ChEBI" id="CHEBI:36208"/>
    </ligand>
</feature>
<feature type="binding site" evidence="1">
    <location>
        <position position="78"/>
    </location>
    <ligand>
        <name>NADP(+)</name>
        <dbReference type="ChEBI" id="CHEBI:58349"/>
    </ligand>
</feature>
<feature type="binding site" evidence="1">
    <location>
        <position position="87"/>
    </location>
    <ligand>
        <name>shikimate</name>
        <dbReference type="ChEBI" id="CHEBI:36208"/>
    </ligand>
</feature>
<feature type="binding site" evidence="1">
    <location>
        <position position="102"/>
    </location>
    <ligand>
        <name>shikimate</name>
        <dbReference type="ChEBI" id="CHEBI:36208"/>
    </ligand>
</feature>
<feature type="binding site" evidence="1">
    <location>
        <begin position="127"/>
        <end position="131"/>
    </location>
    <ligand>
        <name>NADP(+)</name>
        <dbReference type="ChEBI" id="CHEBI:58349"/>
    </ligand>
</feature>
<feature type="binding site" evidence="1">
    <location>
        <begin position="151"/>
        <end position="156"/>
    </location>
    <ligand>
        <name>NADP(+)</name>
        <dbReference type="ChEBI" id="CHEBI:58349"/>
    </ligand>
</feature>
<feature type="binding site" evidence="1">
    <location>
        <position position="215"/>
    </location>
    <ligand>
        <name>NADP(+)</name>
        <dbReference type="ChEBI" id="CHEBI:58349"/>
    </ligand>
</feature>
<feature type="binding site" evidence="1">
    <location>
        <position position="217"/>
    </location>
    <ligand>
        <name>shikimate</name>
        <dbReference type="ChEBI" id="CHEBI:36208"/>
    </ligand>
</feature>
<feature type="binding site" evidence="1">
    <location>
        <position position="239"/>
    </location>
    <ligand>
        <name>NADP(+)</name>
        <dbReference type="ChEBI" id="CHEBI:58349"/>
    </ligand>
</feature>
<organism>
    <name type="scientific">Chromobacterium violaceum (strain ATCC 12472 / DSM 30191 / JCM 1249 / CCUG 213 / NBRC 12614 / NCIMB 9131 / NCTC 9757 / MK)</name>
    <dbReference type="NCBI Taxonomy" id="243365"/>
    <lineage>
        <taxon>Bacteria</taxon>
        <taxon>Pseudomonadati</taxon>
        <taxon>Pseudomonadota</taxon>
        <taxon>Betaproteobacteria</taxon>
        <taxon>Neisseriales</taxon>
        <taxon>Chromobacteriaceae</taxon>
        <taxon>Chromobacterium</taxon>
    </lineage>
</organism>